<comment type="function">
    <text evidence="1">One of the primary rRNA binding proteins, it binds directly to 16S rRNA central domain where it helps coordinate assembly of the platform of the 30S subunit.</text>
</comment>
<comment type="subunit">
    <text evidence="1">Part of the 30S ribosomal subunit.</text>
</comment>
<comment type="similarity">
    <text evidence="1">Belongs to the universal ribosomal protein uS8 family.</text>
</comment>
<sequence>MVMLDLLSNALTAIKNAEAMGKRQVVIWPVNKLIYYTLRVLQRYGYVGEIEYIDDGRGGKYVVQLLGKINDIGAIRPRFPVKYREIVEWEQKYLPARQIGILVISTSQGVMSHLEAKEKKIGGVLLAYVY</sequence>
<protein>
    <recommendedName>
        <fullName evidence="1">Small ribosomal subunit protein uS8</fullName>
    </recommendedName>
    <alternativeName>
        <fullName evidence="2">30S ribosomal protein S8</fullName>
    </alternativeName>
</protein>
<name>RS8_PYRCJ</name>
<reference key="1">
    <citation type="submission" date="2007-02" db="EMBL/GenBank/DDBJ databases">
        <title>Complete sequence of Pyrobaculum calidifontis JCM 11548.</title>
        <authorList>
            <consortium name="US DOE Joint Genome Institute"/>
            <person name="Copeland A."/>
            <person name="Lucas S."/>
            <person name="Lapidus A."/>
            <person name="Barry K."/>
            <person name="Glavina del Rio T."/>
            <person name="Dalin E."/>
            <person name="Tice H."/>
            <person name="Pitluck S."/>
            <person name="Chain P."/>
            <person name="Malfatti S."/>
            <person name="Shin M."/>
            <person name="Vergez L."/>
            <person name="Schmutz J."/>
            <person name="Larimer F."/>
            <person name="Land M."/>
            <person name="Hauser L."/>
            <person name="Kyrpides N."/>
            <person name="Mikhailova N."/>
            <person name="Cozen A.E."/>
            <person name="Fitz-Gibbon S.T."/>
            <person name="House C.H."/>
            <person name="Saltikov C."/>
            <person name="Lowe T.M."/>
            <person name="Richardson P."/>
        </authorList>
    </citation>
    <scope>NUCLEOTIDE SEQUENCE [LARGE SCALE GENOMIC DNA]</scope>
    <source>
        <strain>DSM 21063 / JCM 11548 / VA1</strain>
    </source>
</reference>
<accession>A3MSJ6</accession>
<keyword id="KW-0002">3D-structure</keyword>
<keyword id="KW-0687">Ribonucleoprotein</keyword>
<keyword id="KW-0689">Ribosomal protein</keyword>
<keyword id="KW-0694">RNA-binding</keyword>
<keyword id="KW-0699">rRNA-binding</keyword>
<feature type="chain" id="PRO_0000305771" description="Small ribosomal subunit protein uS8">
    <location>
        <begin position="1"/>
        <end position="130"/>
    </location>
</feature>
<gene>
    <name evidence="1" type="primary">rps8</name>
    <name type="ordered locus">Pcal_0176</name>
</gene>
<proteinExistence type="evidence at protein level"/>
<evidence type="ECO:0000255" key="1">
    <source>
        <dbReference type="HAMAP-Rule" id="MF_01302"/>
    </source>
</evidence>
<evidence type="ECO:0000305" key="2"/>
<dbReference type="EMBL" id="CP000561">
    <property type="protein sequence ID" value="ABO07613.1"/>
    <property type="molecule type" value="Genomic_DNA"/>
</dbReference>
<dbReference type="RefSeq" id="WP_011848870.1">
    <property type="nucleotide sequence ID" value="NC_009073.1"/>
</dbReference>
<dbReference type="PDB" id="9E71">
    <property type="method" value="EM"/>
    <property type="resolution" value="2.36 A"/>
    <property type="chains" value="BI=1-130"/>
</dbReference>
<dbReference type="PDB" id="9E7F">
    <property type="method" value="EM"/>
    <property type="resolution" value="2.53 A"/>
    <property type="chains" value="BI=1-130"/>
</dbReference>
<dbReference type="PDBsum" id="9E71"/>
<dbReference type="PDBsum" id="9E7F"/>
<dbReference type="EMDB" id="EMD-47628"/>
<dbReference type="EMDB" id="EMD-47668"/>
<dbReference type="SMR" id="A3MSJ6"/>
<dbReference type="STRING" id="410359.Pcal_0176"/>
<dbReference type="GeneID" id="4910051"/>
<dbReference type="KEGG" id="pcl:Pcal_0176"/>
<dbReference type="eggNOG" id="arCOG04091">
    <property type="taxonomic scope" value="Archaea"/>
</dbReference>
<dbReference type="HOGENOM" id="CLU_098428_1_1_2"/>
<dbReference type="OrthoDB" id="5670at2157"/>
<dbReference type="Proteomes" id="UP000001431">
    <property type="component" value="Chromosome"/>
</dbReference>
<dbReference type="GO" id="GO:1990904">
    <property type="term" value="C:ribonucleoprotein complex"/>
    <property type="evidence" value="ECO:0007669"/>
    <property type="project" value="UniProtKB-KW"/>
</dbReference>
<dbReference type="GO" id="GO:0005840">
    <property type="term" value="C:ribosome"/>
    <property type="evidence" value="ECO:0007669"/>
    <property type="project" value="UniProtKB-KW"/>
</dbReference>
<dbReference type="GO" id="GO:0019843">
    <property type="term" value="F:rRNA binding"/>
    <property type="evidence" value="ECO:0007669"/>
    <property type="project" value="UniProtKB-UniRule"/>
</dbReference>
<dbReference type="GO" id="GO:0003735">
    <property type="term" value="F:structural constituent of ribosome"/>
    <property type="evidence" value="ECO:0007669"/>
    <property type="project" value="InterPro"/>
</dbReference>
<dbReference type="GO" id="GO:0006412">
    <property type="term" value="P:translation"/>
    <property type="evidence" value="ECO:0007669"/>
    <property type="project" value="UniProtKB-UniRule"/>
</dbReference>
<dbReference type="FunFam" id="3.30.1370.30:FF:000001">
    <property type="entry name" value="40S ribosomal protein S15a"/>
    <property type="match status" value="1"/>
</dbReference>
<dbReference type="FunFam" id="3.30.1490.10:FF:000002">
    <property type="entry name" value="40S ribosomal protein S15a"/>
    <property type="match status" value="1"/>
</dbReference>
<dbReference type="Gene3D" id="3.30.1370.30">
    <property type="match status" value="1"/>
</dbReference>
<dbReference type="Gene3D" id="3.30.1490.10">
    <property type="match status" value="1"/>
</dbReference>
<dbReference type="HAMAP" id="MF_01302_A">
    <property type="entry name" value="Ribosomal_uS8_A"/>
    <property type="match status" value="1"/>
</dbReference>
<dbReference type="InterPro" id="IPR000630">
    <property type="entry name" value="Ribosomal_uS8"/>
</dbReference>
<dbReference type="InterPro" id="IPR047863">
    <property type="entry name" value="Ribosomal_uS8_CS"/>
</dbReference>
<dbReference type="InterPro" id="IPR035987">
    <property type="entry name" value="Ribosomal_uS8_sf"/>
</dbReference>
<dbReference type="NCBIfam" id="NF003115">
    <property type="entry name" value="PRK04034.1"/>
    <property type="match status" value="1"/>
</dbReference>
<dbReference type="PANTHER" id="PTHR11758">
    <property type="entry name" value="40S RIBOSOMAL PROTEIN S15A"/>
    <property type="match status" value="1"/>
</dbReference>
<dbReference type="Pfam" id="PF00410">
    <property type="entry name" value="Ribosomal_S8"/>
    <property type="match status" value="1"/>
</dbReference>
<dbReference type="SUPFAM" id="SSF56047">
    <property type="entry name" value="Ribosomal protein S8"/>
    <property type="match status" value="1"/>
</dbReference>
<dbReference type="PROSITE" id="PS00053">
    <property type="entry name" value="RIBOSOMAL_S8"/>
    <property type="match status" value="1"/>
</dbReference>
<organism>
    <name type="scientific">Pyrobaculum calidifontis (strain DSM 21063 / JCM 11548 / VA1)</name>
    <dbReference type="NCBI Taxonomy" id="410359"/>
    <lineage>
        <taxon>Archaea</taxon>
        <taxon>Thermoproteota</taxon>
        <taxon>Thermoprotei</taxon>
        <taxon>Thermoproteales</taxon>
        <taxon>Thermoproteaceae</taxon>
        <taxon>Pyrobaculum</taxon>
    </lineage>
</organism>